<protein>
    <recommendedName>
        <fullName evidence="1">Isoleucine--tRNA ligase</fullName>
        <ecNumber evidence="1">6.1.1.5</ecNumber>
    </recommendedName>
    <alternativeName>
        <fullName evidence="1">Isoleucyl-tRNA synthetase</fullName>
        <shortName evidence="1">IleRS</shortName>
    </alternativeName>
</protein>
<organism>
    <name type="scientific">Gloeobacter violaceus (strain ATCC 29082 / PCC 7421)</name>
    <dbReference type="NCBI Taxonomy" id="251221"/>
    <lineage>
        <taxon>Bacteria</taxon>
        <taxon>Bacillati</taxon>
        <taxon>Cyanobacteriota</taxon>
        <taxon>Cyanophyceae</taxon>
        <taxon>Gloeobacterales</taxon>
        <taxon>Gloeobacteraceae</taxon>
        <taxon>Gloeobacter</taxon>
    </lineage>
</organism>
<proteinExistence type="inferred from homology"/>
<gene>
    <name evidence="1" type="primary">ileS</name>
    <name type="ordered locus">gll3651</name>
</gene>
<sequence>MTQTPVDYKQTVRTPKTDFPMRANASTREVEIQRFWEEQGIYGRLAQENPGEIFILHDGPPYANGELHVGHALNKILKDIINRYQLLQGRRVRYVPGWDCHGLPIELKVLQDLSQAERSQLTPLDVRTRARDFAQRTVQSQCASYKRFGVWGDWDHPYLTLQPEYEAAQLGVFGKMALKGYIYRGLKPVHWSPSSQTALAEAELEYPTKDDGSPAHTSRSVYVKFPLISIAAPETATVMAAELLPRLSAFHDREEELIDALLGERDDLPEIAVAIWTTTPWTLPGNLAVALNGELDYALVASDEHGLLIVAAELVERLAGTLATRFETIATFRGRELEGSLLAHPLFRRTSPIVLGDHVTTESGTGAVHTAPGHGSEDFELAQRYNLGVLSPVDDYGRFTREADSDRRENLPVFAGKAVLSDGNQAVIEALSAAGALLKEEAYVHKYPYDWRTKKPTIFRATTQWFASVSDFRPQALSAIAQTEWIPASGENRITAMVAGRNDWCISRQRAWGLPIPAFYCENCANVLLTQESVEAVQAAVRVHGSDIWWQKEASELLPPGIACAHCGGTAFRKEKDIMDVWFDSGSSWAGVLGRRPELHYPADVYLEGSDQHRGWFQSSLLTCVATEGTAPYKTVITHGFTLDEHGRKMSKSLGNVVDPKLVIDGGANQKQHPAYGADVLRLWVASVDYTSDQLVGPSVLAQIAEVYRKIRNTARYLLGSLNDFVPERDLVAFDSLGEVDQYLLHRLSVVHLEVTQAFESYQFSRFFQTIQNFCVADLSNFYLDISKDRLYISAEVSLRRRSCQTVLYRVLESLTRLIAPVLPHLAEDIWQHLPYPRSDASVFEAGWPVDHSQWFQPLTVDRWPGLIVLRDRVNIALEAARNAKRIGSSLEAKIRLHVEDPALTDELARQKDELRYLFIVSQVELLDELPAEVSVEEGAAVIVLDADGQKCERCWNYSVHVGEDAEHPTLCERCVSALAGAF</sequence>
<keyword id="KW-0030">Aminoacyl-tRNA synthetase</keyword>
<keyword id="KW-0067">ATP-binding</keyword>
<keyword id="KW-0963">Cytoplasm</keyword>
<keyword id="KW-0436">Ligase</keyword>
<keyword id="KW-0479">Metal-binding</keyword>
<keyword id="KW-0547">Nucleotide-binding</keyword>
<keyword id="KW-0648">Protein biosynthesis</keyword>
<keyword id="KW-1185">Reference proteome</keyword>
<keyword id="KW-0862">Zinc</keyword>
<accession>Q7NF75</accession>
<comment type="function">
    <text evidence="1">Catalyzes the attachment of isoleucine to tRNA(Ile). As IleRS can inadvertently accommodate and process structurally similar amino acids such as valine, to avoid such errors it has two additional distinct tRNA(Ile)-dependent editing activities. One activity is designated as 'pretransfer' editing and involves the hydrolysis of activated Val-AMP. The other activity is designated 'posttransfer' editing and involves deacylation of mischarged Val-tRNA(Ile).</text>
</comment>
<comment type="catalytic activity">
    <reaction evidence="1">
        <text>tRNA(Ile) + L-isoleucine + ATP = L-isoleucyl-tRNA(Ile) + AMP + diphosphate</text>
        <dbReference type="Rhea" id="RHEA:11060"/>
        <dbReference type="Rhea" id="RHEA-COMP:9666"/>
        <dbReference type="Rhea" id="RHEA-COMP:9695"/>
        <dbReference type="ChEBI" id="CHEBI:30616"/>
        <dbReference type="ChEBI" id="CHEBI:33019"/>
        <dbReference type="ChEBI" id="CHEBI:58045"/>
        <dbReference type="ChEBI" id="CHEBI:78442"/>
        <dbReference type="ChEBI" id="CHEBI:78528"/>
        <dbReference type="ChEBI" id="CHEBI:456215"/>
        <dbReference type="EC" id="6.1.1.5"/>
    </reaction>
</comment>
<comment type="cofactor">
    <cofactor evidence="1">
        <name>Zn(2+)</name>
        <dbReference type="ChEBI" id="CHEBI:29105"/>
    </cofactor>
    <text evidence="1">Binds 1 zinc ion per subunit.</text>
</comment>
<comment type="subunit">
    <text evidence="1">Monomer.</text>
</comment>
<comment type="subcellular location">
    <subcellularLocation>
        <location evidence="1">Cytoplasm</location>
    </subcellularLocation>
</comment>
<comment type="domain">
    <text evidence="1">IleRS has two distinct active sites: one for aminoacylation and one for editing. The misactivated valine is translocated from the active site to the editing site, which sterically excludes the correctly activated isoleucine. The single editing site contains two valyl binding pockets, one specific for each substrate (Val-AMP or Val-tRNA(Ile)).</text>
</comment>
<comment type="similarity">
    <text evidence="1">Belongs to the class-I aminoacyl-tRNA synthetase family. IleS type 1 subfamily.</text>
</comment>
<name>SYI_GLOVI</name>
<evidence type="ECO:0000255" key="1">
    <source>
        <dbReference type="HAMAP-Rule" id="MF_02002"/>
    </source>
</evidence>
<dbReference type="EC" id="6.1.1.5" evidence="1"/>
<dbReference type="EMBL" id="BA000045">
    <property type="protein sequence ID" value="BAC91592.1"/>
    <property type="molecule type" value="Genomic_DNA"/>
</dbReference>
<dbReference type="RefSeq" id="NP_926597.1">
    <property type="nucleotide sequence ID" value="NC_005125.1"/>
</dbReference>
<dbReference type="RefSeq" id="WP_011143640.1">
    <property type="nucleotide sequence ID" value="NC_005125.1"/>
</dbReference>
<dbReference type="SMR" id="Q7NF75"/>
<dbReference type="FunCoup" id="Q7NF75">
    <property type="interactions" value="366"/>
</dbReference>
<dbReference type="STRING" id="251221.gene:10761166"/>
<dbReference type="EnsemblBacteria" id="BAC91592">
    <property type="protein sequence ID" value="BAC91592"/>
    <property type="gene ID" value="BAC91592"/>
</dbReference>
<dbReference type="KEGG" id="gvi:gll3651"/>
<dbReference type="PATRIC" id="fig|251221.4.peg.3686"/>
<dbReference type="eggNOG" id="COG0060">
    <property type="taxonomic scope" value="Bacteria"/>
</dbReference>
<dbReference type="HOGENOM" id="CLU_001493_7_0_3"/>
<dbReference type="InParanoid" id="Q7NF75"/>
<dbReference type="OrthoDB" id="9810365at2"/>
<dbReference type="PhylomeDB" id="Q7NF75"/>
<dbReference type="Proteomes" id="UP000000557">
    <property type="component" value="Chromosome"/>
</dbReference>
<dbReference type="GO" id="GO:0005737">
    <property type="term" value="C:cytoplasm"/>
    <property type="evidence" value="ECO:0007669"/>
    <property type="project" value="UniProtKB-SubCell"/>
</dbReference>
<dbReference type="GO" id="GO:0002161">
    <property type="term" value="F:aminoacyl-tRNA deacylase activity"/>
    <property type="evidence" value="ECO:0007669"/>
    <property type="project" value="InterPro"/>
</dbReference>
<dbReference type="GO" id="GO:0005524">
    <property type="term" value="F:ATP binding"/>
    <property type="evidence" value="ECO:0007669"/>
    <property type="project" value="UniProtKB-UniRule"/>
</dbReference>
<dbReference type="GO" id="GO:0004822">
    <property type="term" value="F:isoleucine-tRNA ligase activity"/>
    <property type="evidence" value="ECO:0000318"/>
    <property type="project" value="GO_Central"/>
</dbReference>
<dbReference type="GO" id="GO:0000049">
    <property type="term" value="F:tRNA binding"/>
    <property type="evidence" value="ECO:0007669"/>
    <property type="project" value="InterPro"/>
</dbReference>
<dbReference type="GO" id="GO:0008270">
    <property type="term" value="F:zinc ion binding"/>
    <property type="evidence" value="ECO:0007669"/>
    <property type="project" value="UniProtKB-UniRule"/>
</dbReference>
<dbReference type="GO" id="GO:0006428">
    <property type="term" value="P:isoleucyl-tRNA aminoacylation"/>
    <property type="evidence" value="ECO:0000318"/>
    <property type="project" value="GO_Central"/>
</dbReference>
<dbReference type="GO" id="GO:0006412">
    <property type="term" value="P:translation"/>
    <property type="evidence" value="ECO:0000318"/>
    <property type="project" value="GO_Central"/>
</dbReference>
<dbReference type="CDD" id="cd07960">
    <property type="entry name" value="Anticodon_Ia_Ile_BEm"/>
    <property type="match status" value="1"/>
</dbReference>
<dbReference type="CDD" id="cd00818">
    <property type="entry name" value="IleRS_core"/>
    <property type="match status" value="1"/>
</dbReference>
<dbReference type="FunFam" id="1.10.10.830:FF:000008">
    <property type="entry name" value="Isoleucine--tRNA ligase"/>
    <property type="match status" value="1"/>
</dbReference>
<dbReference type="FunFam" id="1.10.730.20:FF:000001">
    <property type="entry name" value="Isoleucine--tRNA ligase"/>
    <property type="match status" value="1"/>
</dbReference>
<dbReference type="FunFam" id="3.40.50.620:FF:000111">
    <property type="entry name" value="Mitochondrial isoleucyl-tRNA synthetase"/>
    <property type="match status" value="1"/>
</dbReference>
<dbReference type="Gene3D" id="1.10.730.20">
    <property type="match status" value="1"/>
</dbReference>
<dbReference type="Gene3D" id="3.40.50.620">
    <property type="entry name" value="HUPs"/>
    <property type="match status" value="2"/>
</dbReference>
<dbReference type="Gene3D" id="1.10.10.830">
    <property type="entry name" value="Ile-tRNA synthetase CP2 domain-like"/>
    <property type="match status" value="1"/>
</dbReference>
<dbReference type="Gene3D" id="3.90.740.10">
    <property type="entry name" value="Valyl/Leucyl/Isoleucyl-tRNA synthetase, editing domain"/>
    <property type="match status" value="1"/>
</dbReference>
<dbReference type="HAMAP" id="MF_02002">
    <property type="entry name" value="Ile_tRNA_synth_type1"/>
    <property type="match status" value="1"/>
</dbReference>
<dbReference type="InterPro" id="IPR001412">
    <property type="entry name" value="aa-tRNA-synth_I_CS"/>
</dbReference>
<dbReference type="InterPro" id="IPR002300">
    <property type="entry name" value="aa-tRNA-synth_Ia"/>
</dbReference>
<dbReference type="InterPro" id="IPR033708">
    <property type="entry name" value="Anticodon_Ile_BEm"/>
</dbReference>
<dbReference type="InterPro" id="IPR002301">
    <property type="entry name" value="Ile-tRNA-ligase"/>
</dbReference>
<dbReference type="InterPro" id="IPR023585">
    <property type="entry name" value="Ile-tRNA-ligase_type1"/>
</dbReference>
<dbReference type="InterPro" id="IPR050081">
    <property type="entry name" value="Ile-tRNA_ligase"/>
</dbReference>
<dbReference type="InterPro" id="IPR013155">
    <property type="entry name" value="M/V/L/I-tRNA-synth_anticd-bd"/>
</dbReference>
<dbReference type="InterPro" id="IPR014729">
    <property type="entry name" value="Rossmann-like_a/b/a_fold"/>
</dbReference>
<dbReference type="InterPro" id="IPR009080">
    <property type="entry name" value="tRNAsynth_Ia_anticodon-bd"/>
</dbReference>
<dbReference type="InterPro" id="IPR009008">
    <property type="entry name" value="Val/Leu/Ile-tRNA-synth_edit"/>
</dbReference>
<dbReference type="InterPro" id="IPR010663">
    <property type="entry name" value="Znf_FPG/IleRS"/>
</dbReference>
<dbReference type="NCBIfam" id="TIGR00392">
    <property type="entry name" value="ileS"/>
    <property type="match status" value="1"/>
</dbReference>
<dbReference type="PANTHER" id="PTHR42765:SF1">
    <property type="entry name" value="ISOLEUCINE--TRNA LIGASE, MITOCHONDRIAL"/>
    <property type="match status" value="1"/>
</dbReference>
<dbReference type="PANTHER" id="PTHR42765">
    <property type="entry name" value="SOLEUCYL-TRNA SYNTHETASE"/>
    <property type="match status" value="1"/>
</dbReference>
<dbReference type="Pfam" id="PF08264">
    <property type="entry name" value="Anticodon_1"/>
    <property type="match status" value="1"/>
</dbReference>
<dbReference type="Pfam" id="PF00133">
    <property type="entry name" value="tRNA-synt_1"/>
    <property type="match status" value="1"/>
</dbReference>
<dbReference type="Pfam" id="PF06827">
    <property type="entry name" value="zf-FPG_IleRS"/>
    <property type="match status" value="1"/>
</dbReference>
<dbReference type="PRINTS" id="PR00984">
    <property type="entry name" value="TRNASYNTHILE"/>
</dbReference>
<dbReference type="SUPFAM" id="SSF47323">
    <property type="entry name" value="Anticodon-binding domain of a subclass of class I aminoacyl-tRNA synthetases"/>
    <property type="match status" value="1"/>
</dbReference>
<dbReference type="SUPFAM" id="SSF52374">
    <property type="entry name" value="Nucleotidylyl transferase"/>
    <property type="match status" value="1"/>
</dbReference>
<dbReference type="SUPFAM" id="SSF50677">
    <property type="entry name" value="ValRS/IleRS/LeuRS editing domain"/>
    <property type="match status" value="1"/>
</dbReference>
<dbReference type="PROSITE" id="PS00178">
    <property type="entry name" value="AA_TRNA_LIGASE_I"/>
    <property type="match status" value="1"/>
</dbReference>
<reference key="1">
    <citation type="journal article" date="2003" name="DNA Res.">
        <title>Complete genome structure of Gloeobacter violaceus PCC 7421, a cyanobacterium that lacks thylakoids.</title>
        <authorList>
            <person name="Nakamura Y."/>
            <person name="Kaneko T."/>
            <person name="Sato S."/>
            <person name="Mimuro M."/>
            <person name="Miyashita H."/>
            <person name="Tsuchiya T."/>
            <person name="Sasamoto S."/>
            <person name="Watanabe A."/>
            <person name="Kawashima K."/>
            <person name="Kishida Y."/>
            <person name="Kiyokawa C."/>
            <person name="Kohara M."/>
            <person name="Matsumoto M."/>
            <person name="Matsuno A."/>
            <person name="Nakazaki N."/>
            <person name="Shimpo S."/>
            <person name="Takeuchi C."/>
            <person name="Yamada M."/>
            <person name="Tabata S."/>
        </authorList>
    </citation>
    <scope>NUCLEOTIDE SEQUENCE [LARGE SCALE GENOMIC DNA]</scope>
    <source>
        <strain>ATCC 29082 / PCC 7421</strain>
    </source>
</reference>
<feature type="chain" id="PRO_0000098392" description="Isoleucine--tRNA ligase">
    <location>
        <begin position="1"/>
        <end position="983"/>
    </location>
</feature>
<feature type="short sequence motif" description="'HIGH' region">
    <location>
        <begin position="61"/>
        <end position="71"/>
    </location>
</feature>
<feature type="short sequence motif" description="'KMSKS' region">
    <location>
        <begin position="649"/>
        <end position="653"/>
    </location>
</feature>
<feature type="binding site" evidence="1">
    <location>
        <position position="608"/>
    </location>
    <ligand>
        <name>L-isoleucyl-5'-AMP</name>
        <dbReference type="ChEBI" id="CHEBI:178002"/>
    </ligand>
</feature>
<feature type="binding site" evidence="1">
    <location>
        <position position="652"/>
    </location>
    <ligand>
        <name>ATP</name>
        <dbReference type="ChEBI" id="CHEBI:30616"/>
    </ligand>
</feature>
<feature type="binding site" evidence="1">
    <location>
        <position position="952"/>
    </location>
    <ligand>
        <name>Zn(2+)</name>
        <dbReference type="ChEBI" id="CHEBI:29105"/>
    </ligand>
</feature>
<feature type="binding site" evidence="1">
    <location>
        <position position="955"/>
    </location>
    <ligand>
        <name>Zn(2+)</name>
        <dbReference type="ChEBI" id="CHEBI:29105"/>
    </ligand>
</feature>
<feature type="binding site" evidence="1">
    <location>
        <position position="972"/>
    </location>
    <ligand>
        <name>Zn(2+)</name>
        <dbReference type="ChEBI" id="CHEBI:29105"/>
    </ligand>
</feature>
<feature type="binding site" evidence="1">
    <location>
        <position position="975"/>
    </location>
    <ligand>
        <name>Zn(2+)</name>
        <dbReference type="ChEBI" id="CHEBI:29105"/>
    </ligand>
</feature>